<organism>
    <name type="scientific">Arabidopsis thaliana</name>
    <name type="common">Mouse-ear cress</name>
    <dbReference type="NCBI Taxonomy" id="3702"/>
    <lineage>
        <taxon>Eukaryota</taxon>
        <taxon>Viridiplantae</taxon>
        <taxon>Streptophyta</taxon>
        <taxon>Embryophyta</taxon>
        <taxon>Tracheophyta</taxon>
        <taxon>Spermatophyta</taxon>
        <taxon>Magnoliopsida</taxon>
        <taxon>eudicotyledons</taxon>
        <taxon>Gunneridae</taxon>
        <taxon>Pentapetalae</taxon>
        <taxon>rosids</taxon>
        <taxon>malvids</taxon>
        <taxon>Brassicales</taxon>
        <taxon>Brassicaceae</taxon>
        <taxon>Camelineae</taxon>
        <taxon>Arabidopsis</taxon>
    </lineage>
</organism>
<comment type="function">
    <text evidence="1 6">Transcriptional activator that binds specifically to the DNA sequence 5'-TGACG-3'. Recognizes ocs elements like the as-1 motif of the cauliflower mosaic virus 35S promoter. Binding to the as-1-like cis elements mediate auxin- and salicylic acid-inducible transcription. May be involved in the induction of the systemic acquired resistance (SAR) via its interaction with NPR1 (By similarity).</text>
</comment>
<comment type="subunit">
    <text evidence="6 7 8">Binds DNA as a dimer. Interacts with NPR1 and NPR4. Interacts with GRXC7/ROXY1.</text>
</comment>
<comment type="interaction">
    <interactant intactId="EBI-541400">
        <id>Q93ZE2</id>
    </interactant>
    <interactant intactId="EBI-15192249">
        <id>C0SUZ3</id>
        <label>At1g35490</label>
    </interactant>
    <organismsDiffer>false</organismsDiffer>
    <experiments>3</experiments>
</comment>
<comment type="interaction">
    <interactant intactId="EBI-541400">
        <id>Q93ZE2</id>
    </interactant>
    <interactant intactId="EBI-15192535">
        <id>F4JI72</id>
        <label>At4g03250</label>
    </interactant>
    <organismsDiffer>false</organismsDiffer>
    <experiments>4</experiments>
</comment>
<comment type="interaction">
    <interactant intactId="EBI-541400">
        <id>Q93ZE2</id>
    </interactant>
    <interactant intactId="EBI-1640543">
        <id>Q0V7X4</id>
        <label>FIT</label>
    </interactant>
    <organismsDiffer>false</organismsDiffer>
    <experiments>3</experiments>
</comment>
<comment type="interaction">
    <interactant intactId="EBI-541400">
        <id>Q93ZE2</id>
    </interactant>
    <interactant intactId="EBI-2257898">
        <id>Q96305</id>
        <label>GRXC7</label>
    </interactant>
    <organismsDiffer>false</organismsDiffer>
    <experiments>3</experiments>
</comment>
<comment type="interaction">
    <interactant intactId="EBI-541400">
        <id>Q93ZE2</id>
    </interactant>
    <interactant intactId="EBI-25515825">
        <id>Q84XV2</id>
        <label>GTE1</label>
    </interactant>
    <organismsDiffer>false</organismsDiffer>
    <experiments>3</experiments>
</comment>
<comment type="interaction">
    <interactant intactId="EBI-541400">
        <id>Q93ZE2</id>
    </interactant>
    <interactant intactId="EBI-3133327">
        <id>O82277</id>
        <label>TCP10</label>
    </interactant>
    <organismsDiffer>false</organismsDiffer>
    <experiments>4</experiments>
</comment>
<comment type="interaction">
    <interactant intactId="EBI-541400">
        <id>Q93ZE2</id>
    </interactant>
    <interactant intactId="EBI-15192325">
        <id>Q8LPR5</id>
        <label>TCP4</label>
    </interactant>
    <organismsDiffer>false</organismsDiffer>
    <experiments>3</experiments>
</comment>
<comment type="interaction">
    <interactant intactId="EBI-541400">
        <id>Q93ZE2</id>
    </interactant>
    <interactant intactId="EBI-541307">
        <id>P43273</id>
        <label>TGA2</label>
    </interactant>
    <organismsDiffer>false</organismsDiffer>
    <experiments>3</experiments>
</comment>
<comment type="interaction">
    <interactant intactId="EBI-541400">
        <id>Q93ZE2</id>
    </interactant>
    <interactant intactId="EBI-541381">
        <id>Q39163</id>
        <label>TGA5</label>
    </interactant>
    <organismsDiffer>false</organismsDiffer>
    <experiments>7</experiments>
</comment>
<comment type="subcellular location">
    <subcellularLocation>
        <location>Nucleus</location>
    </subcellularLocation>
</comment>
<comment type="similarity">
    <text evidence="9">Belongs to the bZIP family.</text>
</comment>
<comment type="sequence caution" evidence="9">
    <conflict type="erroneous initiation">
        <sequence resource="EMBL-CDS" id="AAF17682"/>
    </conflict>
</comment>
<comment type="sequence caution" evidence="9">
    <conflict type="erroneous initiation">
        <sequence resource="EMBL-CDS" id="CAC42910"/>
    </conflict>
</comment>
<reference key="1">
    <citation type="journal article" date="2002" name="Trends Plant Sci.">
        <title>bZIP transcription factors in Arabidopsis.</title>
        <authorList>
            <person name="Jakoby M."/>
            <person name="Weisshaar B."/>
            <person name="Droege-Laser W."/>
            <person name="Vicente-Carbajosa J."/>
            <person name="Tiedemann J."/>
            <person name="Kroj T."/>
            <person name="Parcy F."/>
        </authorList>
    </citation>
    <scope>NUCLEOTIDE SEQUENCE [MRNA]</scope>
    <scope>GENE FAMILY</scope>
    <scope>NOMENCLATURE</scope>
    <source>
        <strain>cv. Columbia</strain>
    </source>
</reference>
<reference key="2">
    <citation type="journal article" date="2000" name="Nature">
        <title>Sequence and analysis of chromosome 1 of the plant Arabidopsis thaliana.</title>
        <authorList>
            <person name="Theologis A."/>
            <person name="Ecker J.R."/>
            <person name="Palm C.J."/>
            <person name="Federspiel N.A."/>
            <person name="Kaul S."/>
            <person name="White O."/>
            <person name="Alonso J."/>
            <person name="Altafi H."/>
            <person name="Araujo R."/>
            <person name="Bowman C.L."/>
            <person name="Brooks S.Y."/>
            <person name="Buehler E."/>
            <person name="Chan A."/>
            <person name="Chao Q."/>
            <person name="Chen H."/>
            <person name="Cheuk R.F."/>
            <person name="Chin C.W."/>
            <person name="Chung M.K."/>
            <person name="Conn L."/>
            <person name="Conway A.B."/>
            <person name="Conway A.R."/>
            <person name="Creasy T.H."/>
            <person name="Dewar K."/>
            <person name="Dunn P."/>
            <person name="Etgu P."/>
            <person name="Feldblyum T.V."/>
            <person name="Feng J.-D."/>
            <person name="Fong B."/>
            <person name="Fujii C.Y."/>
            <person name="Gill J.E."/>
            <person name="Goldsmith A.D."/>
            <person name="Haas B."/>
            <person name="Hansen N.F."/>
            <person name="Hughes B."/>
            <person name="Huizar L."/>
            <person name="Hunter J.L."/>
            <person name="Jenkins J."/>
            <person name="Johnson-Hopson C."/>
            <person name="Khan S."/>
            <person name="Khaykin E."/>
            <person name="Kim C.J."/>
            <person name="Koo H.L."/>
            <person name="Kremenetskaia I."/>
            <person name="Kurtz D.B."/>
            <person name="Kwan A."/>
            <person name="Lam B."/>
            <person name="Langin-Hooper S."/>
            <person name="Lee A."/>
            <person name="Lee J.M."/>
            <person name="Lenz C.A."/>
            <person name="Li J.H."/>
            <person name="Li Y.-P."/>
            <person name="Lin X."/>
            <person name="Liu S.X."/>
            <person name="Liu Z.A."/>
            <person name="Luros J.S."/>
            <person name="Maiti R."/>
            <person name="Marziali A."/>
            <person name="Militscher J."/>
            <person name="Miranda M."/>
            <person name="Nguyen M."/>
            <person name="Nierman W.C."/>
            <person name="Osborne B.I."/>
            <person name="Pai G."/>
            <person name="Peterson J."/>
            <person name="Pham P.K."/>
            <person name="Rizzo M."/>
            <person name="Rooney T."/>
            <person name="Rowley D."/>
            <person name="Sakano H."/>
            <person name="Salzberg S.L."/>
            <person name="Schwartz J.R."/>
            <person name="Shinn P."/>
            <person name="Southwick A.M."/>
            <person name="Sun H."/>
            <person name="Tallon L.J."/>
            <person name="Tambunga G."/>
            <person name="Toriumi M.J."/>
            <person name="Town C.D."/>
            <person name="Utterback T."/>
            <person name="Van Aken S."/>
            <person name="Vaysberg M."/>
            <person name="Vysotskaia V.S."/>
            <person name="Walker M."/>
            <person name="Wu D."/>
            <person name="Yu G."/>
            <person name="Fraser C.M."/>
            <person name="Venter J.C."/>
            <person name="Davis R.W."/>
        </authorList>
    </citation>
    <scope>NUCLEOTIDE SEQUENCE [LARGE SCALE GENOMIC DNA]</scope>
    <source>
        <strain>cv. Columbia</strain>
    </source>
</reference>
<reference key="3">
    <citation type="journal article" date="2017" name="Plant J.">
        <title>Araport11: a complete reannotation of the Arabidopsis thaliana reference genome.</title>
        <authorList>
            <person name="Cheng C.Y."/>
            <person name="Krishnakumar V."/>
            <person name="Chan A.P."/>
            <person name="Thibaud-Nissen F."/>
            <person name="Schobel S."/>
            <person name="Town C.D."/>
        </authorList>
    </citation>
    <scope>GENOME REANNOTATION</scope>
    <source>
        <strain>cv. Columbia</strain>
    </source>
</reference>
<reference key="4">
    <citation type="journal article" date="2003" name="Science">
        <title>Empirical analysis of transcriptional activity in the Arabidopsis genome.</title>
        <authorList>
            <person name="Yamada K."/>
            <person name="Lim J."/>
            <person name="Dale J.M."/>
            <person name="Chen H."/>
            <person name="Shinn P."/>
            <person name="Palm C.J."/>
            <person name="Southwick A.M."/>
            <person name="Wu H.C."/>
            <person name="Kim C.J."/>
            <person name="Nguyen M."/>
            <person name="Pham P.K."/>
            <person name="Cheuk R.F."/>
            <person name="Karlin-Newmann G."/>
            <person name="Liu S.X."/>
            <person name="Lam B."/>
            <person name="Sakano H."/>
            <person name="Wu T."/>
            <person name="Yu G."/>
            <person name="Miranda M."/>
            <person name="Quach H.L."/>
            <person name="Tripp M."/>
            <person name="Chang C.H."/>
            <person name="Lee J.M."/>
            <person name="Toriumi M.J."/>
            <person name="Chan M.M."/>
            <person name="Tang C.C."/>
            <person name="Onodera C.S."/>
            <person name="Deng J.M."/>
            <person name="Akiyama K."/>
            <person name="Ansari Y."/>
            <person name="Arakawa T."/>
            <person name="Banh J."/>
            <person name="Banno F."/>
            <person name="Bowser L."/>
            <person name="Brooks S.Y."/>
            <person name="Carninci P."/>
            <person name="Chao Q."/>
            <person name="Choy N."/>
            <person name="Enju A."/>
            <person name="Goldsmith A.D."/>
            <person name="Gurjal M."/>
            <person name="Hansen N.F."/>
            <person name="Hayashizaki Y."/>
            <person name="Johnson-Hopson C."/>
            <person name="Hsuan V.W."/>
            <person name="Iida K."/>
            <person name="Karnes M."/>
            <person name="Khan S."/>
            <person name="Koesema E."/>
            <person name="Ishida J."/>
            <person name="Jiang P.X."/>
            <person name="Jones T."/>
            <person name="Kawai J."/>
            <person name="Kamiya A."/>
            <person name="Meyers C."/>
            <person name="Nakajima M."/>
            <person name="Narusaka M."/>
            <person name="Seki M."/>
            <person name="Sakurai T."/>
            <person name="Satou M."/>
            <person name="Tamse R."/>
            <person name="Vaysberg M."/>
            <person name="Wallender E.K."/>
            <person name="Wong C."/>
            <person name="Yamamura Y."/>
            <person name="Yuan S."/>
            <person name="Shinozaki K."/>
            <person name="Davis R.W."/>
            <person name="Theologis A."/>
            <person name="Ecker J.R."/>
        </authorList>
    </citation>
    <scope>NUCLEOTIDE SEQUENCE [LARGE SCALE MRNA]</scope>
    <source>
        <strain>cv. Columbia</strain>
    </source>
</reference>
<reference key="5">
    <citation type="journal article" date="2003" name="Plant Cell">
        <title>The Arabidopsis NPR1 disease resistance protein is a novel cofactor that confers redox regulation of DNA binding activity to the basic domain/leucine zipper transcription factor TGA1.</title>
        <authorList>
            <person name="Despres C."/>
            <person name="Chubak C."/>
            <person name="Rochon A."/>
            <person name="Clark R."/>
            <person name="Bethune T."/>
            <person name="Desveaux D."/>
            <person name="Fobert P.R."/>
        </authorList>
    </citation>
    <scope>FUNCTION</scope>
    <scope>INTERACTION WITH NPR1</scope>
</reference>
<reference key="6">
    <citation type="journal article" date="2005" name="Plant J.">
        <title>An Arabidopsis NPR1-like gene, NPR4, is required for disease resistance.</title>
        <authorList>
            <person name="Liu G."/>
            <person name="Holub E.B."/>
            <person name="Alonso J.M."/>
            <person name="Ecker J.R."/>
            <person name="Fobert P.R."/>
        </authorList>
    </citation>
    <scope>INTERACTION WITH NPR1 AND NPR4</scope>
</reference>
<reference key="7">
    <citation type="journal article" date="2009" name="Plant Cell">
        <title>Nuclear activity of ROXY1, a glutaredoxin interacting with TGA factors, is required for petal development in Arabidopsis thaliana.</title>
        <authorList>
            <person name="Li S."/>
            <person name="Lauri A."/>
            <person name="Ziemann M."/>
            <person name="Busch A."/>
            <person name="Bhave M."/>
            <person name="Zachgo S."/>
        </authorList>
    </citation>
    <scope>INTERACTION WITH GRXC7/ROXY1</scope>
</reference>
<sequence length="368" mass="41913">MMSSSSPTQLASLRDMGIYEPFQQIVGWGNVFKSDINDHSPNTATSSIIQVDPRIDDHNNNIKINYDSSHNQIEAEQPSSNDNQDDDGRIHDKMKRRLAQNREAARKSRLRKKAYVQQLEESRLKLSQLEQELEKVKQQGHLGPSGSINTGIASFEMEYSHWLQEQSRRVSELRTALQSHISDIELKMLVESCLNHYANLFQMKSDAAKADVFYLISGMWRTSTERFFQWIGGFRPSELLNVVMPYLQPLTDQQILEVRNLQQSSQQAEDALSQGIDKLQQSLAESIVIDAVIESTHYPTHMAAAIENLQALEGFVNQADHLRQQTLQQMAKILTTRQSARGLLALGEYLHRLRALSSLWAARPQEPT</sequence>
<feature type="chain" id="PRO_0000076559" description="Transcription factor TGA7">
    <location>
        <begin position="1"/>
        <end position="368"/>
    </location>
</feature>
<feature type="domain" description="bZIP" evidence="3">
    <location>
        <begin position="91"/>
        <end position="151"/>
    </location>
</feature>
<feature type="domain" description="DOG1" evidence="4">
    <location>
        <begin position="152"/>
        <end position="363"/>
    </location>
</feature>
<feature type="region of interest" description="Disordered" evidence="5">
    <location>
        <begin position="70"/>
        <end position="89"/>
    </location>
</feature>
<feature type="region of interest" description="Basic motif" evidence="3">
    <location>
        <begin position="93"/>
        <end position="113"/>
    </location>
</feature>
<feature type="region of interest" description="Leucine-zipper" evidence="3">
    <location>
        <begin position="119"/>
        <end position="133"/>
    </location>
</feature>
<feature type="coiled-coil region" evidence="2">
    <location>
        <begin position="92"/>
        <end position="142"/>
    </location>
</feature>
<feature type="coiled-coil region" evidence="2">
    <location>
        <begin position="252"/>
        <end position="285"/>
    </location>
</feature>
<feature type="compositionally biased region" description="Polar residues" evidence="5">
    <location>
        <begin position="70"/>
        <end position="82"/>
    </location>
</feature>
<feature type="helix" evidence="10">
    <location>
        <begin position="150"/>
        <end position="176"/>
    </location>
</feature>
<feature type="turn" evidence="10">
    <location>
        <begin position="177"/>
        <end position="180"/>
    </location>
</feature>
<feature type="helix" evidence="10">
    <location>
        <begin position="183"/>
        <end position="217"/>
    </location>
</feature>
<feature type="turn" evidence="10">
    <location>
        <begin position="218"/>
        <end position="220"/>
    </location>
</feature>
<feature type="helix" evidence="10">
    <location>
        <begin position="223"/>
        <end position="227"/>
    </location>
</feature>
<feature type="helix" evidence="10">
    <location>
        <begin position="236"/>
        <end position="243"/>
    </location>
</feature>
<feature type="helix" evidence="10">
    <location>
        <begin position="244"/>
        <end position="247"/>
    </location>
</feature>
<feature type="helix" evidence="10">
    <location>
        <begin position="252"/>
        <end position="293"/>
    </location>
</feature>
<feature type="helix" evidence="10">
    <location>
        <begin position="302"/>
        <end position="310"/>
    </location>
</feature>
<feature type="helix" evidence="10">
    <location>
        <begin position="312"/>
        <end position="333"/>
    </location>
</feature>
<feature type="helix" evidence="10">
    <location>
        <begin position="336"/>
        <end position="354"/>
    </location>
</feature>
<feature type="turn" evidence="10">
    <location>
        <begin position="355"/>
        <end position="359"/>
    </location>
</feature>
<evidence type="ECO:0000250" key="1"/>
<evidence type="ECO:0000255" key="2"/>
<evidence type="ECO:0000255" key="3">
    <source>
        <dbReference type="PROSITE-ProRule" id="PRU00978"/>
    </source>
</evidence>
<evidence type="ECO:0000255" key="4">
    <source>
        <dbReference type="PROSITE-ProRule" id="PRU01147"/>
    </source>
</evidence>
<evidence type="ECO:0000256" key="5">
    <source>
        <dbReference type="SAM" id="MobiDB-lite"/>
    </source>
</evidence>
<evidence type="ECO:0000269" key="6">
    <source>
    </source>
</evidence>
<evidence type="ECO:0000269" key="7">
    <source>
    </source>
</evidence>
<evidence type="ECO:0000269" key="8">
    <source>
    </source>
</evidence>
<evidence type="ECO:0000305" key="9"/>
<evidence type="ECO:0007829" key="10">
    <source>
        <dbReference type="PDB" id="8GYZ"/>
    </source>
</evidence>
<proteinExistence type="evidence at protein level"/>
<name>TGA7_ARATH</name>
<protein>
    <recommendedName>
        <fullName>Transcription factor TGA7</fullName>
    </recommendedName>
    <alternativeName>
        <fullName>bZIP transcription factor 50</fullName>
        <shortName>AtbZIP50</shortName>
    </alternativeName>
</protein>
<gene>
    <name type="primary">TGA7</name>
    <name type="synonym">BZIP50</name>
    <name type="ordered locus">At1g77920</name>
    <name type="ORF">F28K19.13</name>
</gene>
<dbReference type="EMBL" id="AJ315736">
    <property type="protein sequence ID" value="CAC42910.1"/>
    <property type="status" value="ALT_INIT"/>
    <property type="molecule type" value="mRNA"/>
</dbReference>
<dbReference type="EMBL" id="AC009243">
    <property type="protein sequence ID" value="AAF17682.1"/>
    <property type="status" value="ALT_INIT"/>
    <property type="molecule type" value="Genomic_DNA"/>
</dbReference>
<dbReference type="EMBL" id="CP002684">
    <property type="protein sequence ID" value="AEE36045.1"/>
    <property type="molecule type" value="Genomic_DNA"/>
</dbReference>
<dbReference type="EMBL" id="AY057596">
    <property type="protein sequence ID" value="AAL14391.1"/>
    <property type="molecule type" value="mRNA"/>
</dbReference>
<dbReference type="EMBL" id="BT010164">
    <property type="protein sequence ID" value="AAQ22633.1"/>
    <property type="molecule type" value="mRNA"/>
</dbReference>
<dbReference type="RefSeq" id="NP_565162.1">
    <property type="nucleotide sequence ID" value="NM_106441.4"/>
</dbReference>
<dbReference type="PDB" id="8GYZ">
    <property type="method" value="X-ray"/>
    <property type="resolution" value="2.06 A"/>
    <property type="chains" value="A/B=80-368"/>
</dbReference>
<dbReference type="PDBsum" id="8GYZ"/>
<dbReference type="SMR" id="Q93ZE2"/>
<dbReference type="BioGRID" id="29346">
    <property type="interactions" value="26"/>
</dbReference>
<dbReference type="FunCoup" id="Q93ZE2">
    <property type="interactions" value="293"/>
</dbReference>
<dbReference type="IntAct" id="Q93ZE2">
    <property type="interactions" value="26"/>
</dbReference>
<dbReference type="STRING" id="3702.Q93ZE2"/>
<dbReference type="PaxDb" id="3702-AT1G77920.1"/>
<dbReference type="ProteomicsDB" id="246402"/>
<dbReference type="EnsemblPlants" id="AT1G77920.1">
    <property type="protein sequence ID" value="AT1G77920.1"/>
    <property type="gene ID" value="AT1G77920"/>
</dbReference>
<dbReference type="GeneID" id="844127"/>
<dbReference type="Gramene" id="AT1G77920.1">
    <property type="protein sequence ID" value="AT1G77920.1"/>
    <property type="gene ID" value="AT1G77920"/>
</dbReference>
<dbReference type="KEGG" id="ath:AT1G77920"/>
<dbReference type="Araport" id="AT1G77920"/>
<dbReference type="TAIR" id="AT1G77920">
    <property type="gene designation" value="TGA7"/>
</dbReference>
<dbReference type="eggNOG" id="ENOG502QS1H">
    <property type="taxonomic scope" value="Eukaryota"/>
</dbReference>
<dbReference type="HOGENOM" id="CLU_024782_1_0_1"/>
<dbReference type="InParanoid" id="Q93ZE2"/>
<dbReference type="OMA" id="NTGAGNY"/>
<dbReference type="PhylomeDB" id="Q93ZE2"/>
<dbReference type="PRO" id="PR:Q93ZE2"/>
<dbReference type="Proteomes" id="UP000006548">
    <property type="component" value="Chromosome 1"/>
</dbReference>
<dbReference type="ExpressionAtlas" id="Q93ZE2">
    <property type="expression patterns" value="baseline and differential"/>
</dbReference>
<dbReference type="GO" id="GO:0005634">
    <property type="term" value="C:nucleus"/>
    <property type="evidence" value="ECO:0007669"/>
    <property type="project" value="UniProtKB-SubCell"/>
</dbReference>
<dbReference type="GO" id="GO:0003700">
    <property type="term" value="F:DNA-binding transcription factor activity"/>
    <property type="evidence" value="ECO:0000250"/>
    <property type="project" value="TAIR"/>
</dbReference>
<dbReference type="GO" id="GO:0000976">
    <property type="term" value="F:transcription cis-regulatory region binding"/>
    <property type="evidence" value="ECO:0000353"/>
    <property type="project" value="TAIR"/>
</dbReference>
<dbReference type="GO" id="GO:0042742">
    <property type="term" value="P:defense response to bacterium"/>
    <property type="evidence" value="ECO:0000315"/>
    <property type="project" value="TAIR"/>
</dbReference>
<dbReference type="GO" id="GO:0006351">
    <property type="term" value="P:DNA-templated transcription"/>
    <property type="evidence" value="ECO:0007669"/>
    <property type="project" value="InterPro"/>
</dbReference>
<dbReference type="FunFam" id="1.20.5.170:FF:000019">
    <property type="entry name" value="BZIP family transcription factor"/>
    <property type="match status" value="1"/>
</dbReference>
<dbReference type="Gene3D" id="1.20.5.170">
    <property type="match status" value="1"/>
</dbReference>
<dbReference type="InterPro" id="IPR004827">
    <property type="entry name" value="bZIP"/>
</dbReference>
<dbReference type="InterPro" id="IPR046347">
    <property type="entry name" value="bZIP_sf"/>
</dbReference>
<dbReference type="InterPro" id="IPR025422">
    <property type="entry name" value="TGA_domain"/>
</dbReference>
<dbReference type="PANTHER" id="PTHR45693:SF7">
    <property type="entry name" value="TRANSCRIPTION FACTOR TGA7"/>
    <property type="match status" value="1"/>
</dbReference>
<dbReference type="PANTHER" id="PTHR45693">
    <property type="entry name" value="TRANSCRIPTION FACTOR TGA9"/>
    <property type="match status" value="1"/>
</dbReference>
<dbReference type="Pfam" id="PF00170">
    <property type="entry name" value="bZIP_1"/>
    <property type="match status" value="1"/>
</dbReference>
<dbReference type="Pfam" id="PF14144">
    <property type="entry name" value="DOG1"/>
    <property type="match status" value="1"/>
</dbReference>
<dbReference type="SMART" id="SM00338">
    <property type="entry name" value="BRLZ"/>
    <property type="match status" value="1"/>
</dbReference>
<dbReference type="SUPFAM" id="SSF57959">
    <property type="entry name" value="Leucine zipper domain"/>
    <property type="match status" value="1"/>
</dbReference>
<dbReference type="PROSITE" id="PS50217">
    <property type="entry name" value="BZIP"/>
    <property type="match status" value="1"/>
</dbReference>
<dbReference type="PROSITE" id="PS00036">
    <property type="entry name" value="BZIP_BASIC"/>
    <property type="match status" value="1"/>
</dbReference>
<dbReference type="PROSITE" id="PS51806">
    <property type="entry name" value="DOG1"/>
    <property type="match status" value="1"/>
</dbReference>
<keyword id="KW-0002">3D-structure</keyword>
<keyword id="KW-0010">Activator</keyword>
<keyword id="KW-0175">Coiled coil</keyword>
<keyword id="KW-0238">DNA-binding</keyword>
<keyword id="KW-0539">Nucleus</keyword>
<keyword id="KW-1185">Reference proteome</keyword>
<keyword id="KW-0804">Transcription</keyword>
<keyword id="KW-0805">Transcription regulation</keyword>
<accession>Q93ZE2</accession>
<accession>Q9SH09</accession>